<gene>
    <name type="primary">MT-CYB</name>
    <name type="synonym">COB</name>
    <name type="synonym">CYTB</name>
    <name type="synonym">MTCYB</name>
</gene>
<evidence type="ECO:0000250" key="1"/>
<evidence type="ECO:0000250" key="2">
    <source>
        <dbReference type="UniProtKB" id="P00157"/>
    </source>
</evidence>
<evidence type="ECO:0000255" key="3">
    <source>
        <dbReference type="PROSITE-ProRule" id="PRU00967"/>
    </source>
</evidence>
<evidence type="ECO:0000255" key="4">
    <source>
        <dbReference type="PROSITE-ProRule" id="PRU00968"/>
    </source>
</evidence>
<feature type="chain" id="PRO_0000060875" description="Cytochrome b">
    <location>
        <begin position="1"/>
        <end position="379"/>
    </location>
</feature>
<feature type="transmembrane region" description="Helical" evidence="2">
    <location>
        <begin position="33"/>
        <end position="53"/>
    </location>
</feature>
<feature type="transmembrane region" description="Helical" evidence="2">
    <location>
        <begin position="77"/>
        <end position="98"/>
    </location>
</feature>
<feature type="transmembrane region" description="Helical" evidence="2">
    <location>
        <begin position="113"/>
        <end position="133"/>
    </location>
</feature>
<feature type="transmembrane region" description="Helical" evidence="2">
    <location>
        <begin position="178"/>
        <end position="198"/>
    </location>
</feature>
<feature type="transmembrane region" description="Helical" evidence="2">
    <location>
        <begin position="226"/>
        <end position="246"/>
    </location>
</feature>
<feature type="transmembrane region" description="Helical" evidence="2">
    <location>
        <begin position="288"/>
        <end position="308"/>
    </location>
</feature>
<feature type="transmembrane region" description="Helical" evidence="2">
    <location>
        <begin position="320"/>
        <end position="340"/>
    </location>
</feature>
<feature type="transmembrane region" description="Helical" evidence="2">
    <location>
        <begin position="347"/>
        <end position="367"/>
    </location>
</feature>
<feature type="binding site" description="axial binding residue" evidence="2">
    <location>
        <position position="83"/>
    </location>
    <ligand>
        <name>heme b</name>
        <dbReference type="ChEBI" id="CHEBI:60344"/>
        <label>b562</label>
    </ligand>
    <ligandPart>
        <name>Fe</name>
        <dbReference type="ChEBI" id="CHEBI:18248"/>
    </ligandPart>
</feature>
<feature type="binding site" description="axial binding residue" evidence="2">
    <location>
        <position position="97"/>
    </location>
    <ligand>
        <name>heme b</name>
        <dbReference type="ChEBI" id="CHEBI:60344"/>
        <label>b566</label>
    </ligand>
    <ligandPart>
        <name>Fe</name>
        <dbReference type="ChEBI" id="CHEBI:18248"/>
    </ligandPart>
</feature>
<feature type="binding site" description="axial binding residue" evidence="2">
    <location>
        <position position="182"/>
    </location>
    <ligand>
        <name>heme b</name>
        <dbReference type="ChEBI" id="CHEBI:60344"/>
        <label>b562</label>
    </ligand>
    <ligandPart>
        <name>Fe</name>
        <dbReference type="ChEBI" id="CHEBI:18248"/>
    </ligandPart>
</feature>
<feature type="binding site" description="axial binding residue" evidence="2">
    <location>
        <position position="196"/>
    </location>
    <ligand>
        <name>heme b</name>
        <dbReference type="ChEBI" id="CHEBI:60344"/>
        <label>b566</label>
    </ligand>
    <ligandPart>
        <name>Fe</name>
        <dbReference type="ChEBI" id="CHEBI:18248"/>
    </ligandPart>
</feature>
<feature type="binding site" evidence="2">
    <location>
        <position position="201"/>
    </location>
    <ligand>
        <name>a ubiquinone</name>
        <dbReference type="ChEBI" id="CHEBI:16389"/>
    </ligand>
</feature>
<geneLocation type="mitochondrion"/>
<proteinExistence type="inferred from homology"/>
<name>CYB_DELDE</name>
<protein>
    <recommendedName>
        <fullName>Cytochrome b</fullName>
    </recommendedName>
    <alternativeName>
        <fullName>Complex III subunit 3</fullName>
    </alternativeName>
    <alternativeName>
        <fullName>Complex III subunit III</fullName>
    </alternativeName>
    <alternativeName>
        <fullName>Cytochrome b-c1 complex subunit 3</fullName>
    </alternativeName>
    <alternativeName>
        <fullName>Ubiquinol-cytochrome-c reductase complex cytochrome b subunit</fullName>
    </alternativeName>
</protein>
<reference key="1">
    <citation type="journal article" date="1999" name="Mar. Mamm. Sci.">
        <title>Phylogenetic relationships among the delphinid cetaceans based on full cytochrome b sequences.</title>
        <authorList>
            <person name="LeDuc R.G."/>
            <person name="Perrin W.F."/>
            <person name="Dizon A.E."/>
        </authorList>
    </citation>
    <scope>NUCLEOTIDE SEQUENCE [GENOMIC DNA]</scope>
</reference>
<organism>
    <name type="scientific">Delphinus delphis</name>
    <name type="common">Short-beaked common dolphin</name>
    <dbReference type="NCBI Taxonomy" id="9728"/>
    <lineage>
        <taxon>Eukaryota</taxon>
        <taxon>Metazoa</taxon>
        <taxon>Chordata</taxon>
        <taxon>Craniata</taxon>
        <taxon>Vertebrata</taxon>
        <taxon>Euteleostomi</taxon>
        <taxon>Mammalia</taxon>
        <taxon>Eutheria</taxon>
        <taxon>Laurasiatheria</taxon>
        <taxon>Artiodactyla</taxon>
        <taxon>Whippomorpha</taxon>
        <taxon>Cetacea</taxon>
        <taxon>Odontoceti</taxon>
        <taxon>Delphinidae</taxon>
        <taxon>Delphinus</taxon>
    </lineage>
</organism>
<dbReference type="EMBL" id="AF084084">
    <property type="protein sequence ID" value="AAD54461.1"/>
    <property type="molecule type" value="Genomic_DNA"/>
</dbReference>
<dbReference type="EMBL" id="AF084085">
    <property type="protein sequence ID" value="AAD54462.1"/>
    <property type="molecule type" value="Genomic_DNA"/>
</dbReference>
<dbReference type="SMR" id="Q9T4B2"/>
<dbReference type="GO" id="GO:0005743">
    <property type="term" value="C:mitochondrial inner membrane"/>
    <property type="evidence" value="ECO:0007669"/>
    <property type="project" value="UniProtKB-SubCell"/>
</dbReference>
<dbReference type="GO" id="GO:0045275">
    <property type="term" value="C:respiratory chain complex III"/>
    <property type="evidence" value="ECO:0007669"/>
    <property type="project" value="InterPro"/>
</dbReference>
<dbReference type="GO" id="GO:0046872">
    <property type="term" value="F:metal ion binding"/>
    <property type="evidence" value="ECO:0007669"/>
    <property type="project" value="UniProtKB-KW"/>
</dbReference>
<dbReference type="GO" id="GO:0008121">
    <property type="term" value="F:ubiquinol-cytochrome-c reductase activity"/>
    <property type="evidence" value="ECO:0007669"/>
    <property type="project" value="InterPro"/>
</dbReference>
<dbReference type="GO" id="GO:0006122">
    <property type="term" value="P:mitochondrial electron transport, ubiquinol to cytochrome c"/>
    <property type="evidence" value="ECO:0007669"/>
    <property type="project" value="TreeGrafter"/>
</dbReference>
<dbReference type="CDD" id="cd00290">
    <property type="entry name" value="cytochrome_b_C"/>
    <property type="match status" value="1"/>
</dbReference>
<dbReference type="CDD" id="cd00284">
    <property type="entry name" value="Cytochrome_b_N"/>
    <property type="match status" value="1"/>
</dbReference>
<dbReference type="FunFam" id="1.20.810.10:FF:000002">
    <property type="entry name" value="Cytochrome b"/>
    <property type="match status" value="1"/>
</dbReference>
<dbReference type="Gene3D" id="1.20.810.10">
    <property type="entry name" value="Cytochrome Bc1 Complex, Chain C"/>
    <property type="match status" value="1"/>
</dbReference>
<dbReference type="InterPro" id="IPR005798">
    <property type="entry name" value="Cyt_b/b6_C"/>
</dbReference>
<dbReference type="InterPro" id="IPR036150">
    <property type="entry name" value="Cyt_b/b6_C_sf"/>
</dbReference>
<dbReference type="InterPro" id="IPR005797">
    <property type="entry name" value="Cyt_b/b6_N"/>
</dbReference>
<dbReference type="InterPro" id="IPR027387">
    <property type="entry name" value="Cytb/b6-like_sf"/>
</dbReference>
<dbReference type="InterPro" id="IPR030689">
    <property type="entry name" value="Cytochrome_b"/>
</dbReference>
<dbReference type="InterPro" id="IPR048260">
    <property type="entry name" value="Cytochrome_b_C_euk/bac"/>
</dbReference>
<dbReference type="InterPro" id="IPR048259">
    <property type="entry name" value="Cytochrome_b_N_euk/bac"/>
</dbReference>
<dbReference type="InterPro" id="IPR016174">
    <property type="entry name" value="Di-haem_cyt_TM"/>
</dbReference>
<dbReference type="PANTHER" id="PTHR19271">
    <property type="entry name" value="CYTOCHROME B"/>
    <property type="match status" value="1"/>
</dbReference>
<dbReference type="PANTHER" id="PTHR19271:SF16">
    <property type="entry name" value="CYTOCHROME B"/>
    <property type="match status" value="1"/>
</dbReference>
<dbReference type="Pfam" id="PF00032">
    <property type="entry name" value="Cytochrom_B_C"/>
    <property type="match status" value="1"/>
</dbReference>
<dbReference type="Pfam" id="PF00033">
    <property type="entry name" value="Cytochrome_B"/>
    <property type="match status" value="1"/>
</dbReference>
<dbReference type="PIRSF" id="PIRSF038885">
    <property type="entry name" value="COB"/>
    <property type="match status" value="1"/>
</dbReference>
<dbReference type="SUPFAM" id="SSF81648">
    <property type="entry name" value="a domain/subunit of cytochrome bc1 complex (Ubiquinol-cytochrome c reductase)"/>
    <property type="match status" value="1"/>
</dbReference>
<dbReference type="SUPFAM" id="SSF81342">
    <property type="entry name" value="Transmembrane di-heme cytochromes"/>
    <property type="match status" value="1"/>
</dbReference>
<dbReference type="PROSITE" id="PS51003">
    <property type="entry name" value="CYTB_CTER"/>
    <property type="match status" value="1"/>
</dbReference>
<dbReference type="PROSITE" id="PS51002">
    <property type="entry name" value="CYTB_NTER"/>
    <property type="match status" value="1"/>
</dbReference>
<comment type="function">
    <text evidence="2">Component of the ubiquinol-cytochrome c reductase complex (complex III or cytochrome b-c1 complex) that is part of the mitochondrial respiratory chain. The b-c1 complex mediates electron transfer from ubiquinol to cytochrome c. Contributes to the generation of a proton gradient across the mitochondrial membrane that is then used for ATP synthesis.</text>
</comment>
<comment type="cofactor">
    <cofactor evidence="2">
        <name>heme b</name>
        <dbReference type="ChEBI" id="CHEBI:60344"/>
    </cofactor>
    <text evidence="2">Binds 2 heme b groups non-covalently.</text>
</comment>
<comment type="subunit">
    <text evidence="2">The cytochrome bc1 complex contains 11 subunits: 3 respiratory subunits (MT-CYB, CYC1 and UQCRFS1), 2 core proteins (UQCRC1 and UQCRC2) and 6 low-molecular weight proteins (UQCRH/QCR6, UQCRB/QCR7, UQCRQ/QCR8, UQCR10/QCR9, UQCR11/QCR10 and a cleavage product of UQCRFS1). This cytochrome bc1 complex then forms a dimer.</text>
</comment>
<comment type="subcellular location">
    <subcellularLocation>
        <location evidence="2">Mitochondrion inner membrane</location>
        <topology evidence="2">Multi-pass membrane protein</topology>
    </subcellularLocation>
</comment>
<comment type="miscellaneous">
    <text evidence="1">Heme 1 (or BL or b562) is low-potential and absorbs at about 562 nm, and heme 2 (or BH or b566) is high-potential and absorbs at about 566 nm.</text>
</comment>
<comment type="similarity">
    <text evidence="3 4">Belongs to the cytochrome b family.</text>
</comment>
<comment type="caution">
    <text evidence="2">The full-length protein contains only eight transmembrane helices, not nine as predicted by bioinformatics tools.</text>
</comment>
<accession>Q9T4B2</accession>
<sequence>MTNIRKTHPLMKILNDAFIDLPTPSNISSWWNFGSLLGLCLIMQILTGLFLAMHYTPDTSTAFSSVAHICRDVNYGWFIRYLHANGASMFFICLYAHIGRGLYYGSYMFQETWNIGVLLLLTVMATAFVGYVLPWGQMSFWGATVITNLLSAIPYIGTTLVEWIWGGFSVDKATLTRFFAFHFILPFIITALAAVHLLFLHETGSNNPTGIPSNMDMIPFHPYYTIKDILGALLLILTLLALTLFTPDLLGDPDNYTPANPLSTPAHIKPEWYFLFAYAILRSIPNKLGGVLALLLSILILIFIPMLQTSKQRSMMFRPFSQLLFWTLIADLLTLTWIGGQPVEHPYIIVGQLASILYFLLILVLMPTAGLIENKLLKW</sequence>
<keyword id="KW-0249">Electron transport</keyword>
<keyword id="KW-0349">Heme</keyword>
<keyword id="KW-0408">Iron</keyword>
<keyword id="KW-0472">Membrane</keyword>
<keyword id="KW-0479">Metal-binding</keyword>
<keyword id="KW-0496">Mitochondrion</keyword>
<keyword id="KW-0999">Mitochondrion inner membrane</keyword>
<keyword id="KW-0679">Respiratory chain</keyword>
<keyword id="KW-0812">Transmembrane</keyword>
<keyword id="KW-1133">Transmembrane helix</keyword>
<keyword id="KW-0813">Transport</keyword>
<keyword id="KW-0830">Ubiquinone</keyword>